<sequence>SADPNFLRF</sequence>
<evidence type="ECO:0000269" key="1">
    <source>
    </source>
</evidence>
<evidence type="ECO:0000305" key="2"/>
<keyword id="KW-0027">Amidation</keyword>
<keyword id="KW-0903">Direct protein sequencing</keyword>
<keyword id="KW-0527">Neuropeptide</keyword>
<keyword id="KW-1185">Reference proteome</keyword>
<keyword id="KW-0964">Secreted</keyword>
<proteinExistence type="evidence at protein level"/>
<feature type="peptide" id="PRO_0000043707" description="FMRFamide-like neuropeptide PF2">
    <location>
        <begin position="1"/>
        <end position="9"/>
    </location>
</feature>
<feature type="modified residue" description="Phenylalanine amide" evidence="1">
    <location>
        <position position="9"/>
    </location>
</feature>
<reference key="1">
    <citation type="journal article" date="1992" name="Peptides">
        <title>Two FMRFamide-like peptides from the free-living nematode Panagrellus redivivus.</title>
        <authorList>
            <person name="Geary T.G."/>
            <person name="Price D.A."/>
            <person name="Bowman J.W."/>
            <person name="Winterrowd C.A."/>
            <person name="Mackenzie C.D."/>
            <person name="Garrison R.D."/>
            <person name="Williams J.F."/>
            <person name="Friedman A.R."/>
        </authorList>
    </citation>
    <scope>PROTEIN SEQUENCE</scope>
    <scope>AMIDATION AT PHE-9</scope>
</reference>
<dbReference type="Proteomes" id="UP000492821">
    <property type="component" value="Unplaced"/>
</dbReference>
<dbReference type="GO" id="GO:0005576">
    <property type="term" value="C:extracellular region"/>
    <property type="evidence" value="ECO:0007669"/>
    <property type="project" value="UniProtKB-SubCell"/>
</dbReference>
<dbReference type="GO" id="GO:0007218">
    <property type="term" value="P:neuropeptide signaling pathway"/>
    <property type="evidence" value="ECO:0007669"/>
    <property type="project" value="UniProtKB-KW"/>
</dbReference>
<accession>P41873</accession>
<protein>
    <recommendedName>
        <fullName>FMRFamide-like neuropeptide PF2</fullName>
    </recommendedName>
    <alternativeName>
        <fullName>SADPNFLRF-amide</fullName>
    </alternativeName>
</protein>
<comment type="function">
    <text>Myoactive.</text>
</comment>
<comment type="subcellular location">
    <subcellularLocation>
        <location>Secreted</location>
    </subcellularLocation>
</comment>
<comment type="tissue specificity">
    <text>Nerve cords and paired groups of cells located caudally to the base of the pharynx.</text>
</comment>
<comment type="similarity">
    <text evidence="2">Belongs to the FARP (FMRFamide related peptide) family.</text>
</comment>
<name>FAR2_PANRE</name>
<organism>
    <name type="scientific">Panagrellus redivivus</name>
    <name type="common">Microworm</name>
    <dbReference type="NCBI Taxonomy" id="6233"/>
    <lineage>
        <taxon>Eukaryota</taxon>
        <taxon>Metazoa</taxon>
        <taxon>Ecdysozoa</taxon>
        <taxon>Nematoda</taxon>
        <taxon>Chromadorea</taxon>
        <taxon>Rhabditida</taxon>
        <taxon>Tylenchina</taxon>
        <taxon>Panagrolaimomorpha</taxon>
        <taxon>Panagrolaimoidea</taxon>
        <taxon>Panagrolaimidae</taxon>
        <taxon>Panagrellus</taxon>
    </lineage>
</organism>